<dbReference type="EMBL" id="AL391712">
    <property type="protein sequence ID" value="CAC05471.1"/>
    <property type="status" value="ALT_SEQ"/>
    <property type="molecule type" value="Genomic_DNA"/>
</dbReference>
<dbReference type="EMBL" id="CP002688">
    <property type="protein sequence ID" value="AED91395.1"/>
    <property type="molecule type" value="Genomic_DNA"/>
</dbReference>
<dbReference type="EMBL" id="AY042834">
    <property type="protein sequence ID" value="AAK68774.1"/>
    <property type="molecule type" value="mRNA"/>
</dbReference>
<dbReference type="EMBL" id="BT002562">
    <property type="protein sequence ID" value="AAO00922.1"/>
    <property type="molecule type" value="mRNA"/>
</dbReference>
<dbReference type="EMBL" id="AY086405">
    <property type="protein sequence ID" value="AAM64472.1"/>
    <property type="molecule type" value="mRNA"/>
</dbReference>
<dbReference type="RefSeq" id="NP_568214.1">
    <property type="nucleotide sequence ID" value="NM_120982.3"/>
</dbReference>
<dbReference type="SMR" id="Q94B59"/>
<dbReference type="BioGRID" id="16082">
    <property type="interactions" value="6"/>
</dbReference>
<dbReference type="FunCoup" id="Q94B59">
    <property type="interactions" value="1001"/>
</dbReference>
<dbReference type="IntAct" id="Q94B59">
    <property type="interactions" value="7"/>
</dbReference>
<dbReference type="STRING" id="3702.Q94B59"/>
<dbReference type="PaxDb" id="3702-AT5G09450.1"/>
<dbReference type="ProteomicsDB" id="249001"/>
<dbReference type="EnsemblPlants" id="AT5G09450.1">
    <property type="protein sequence ID" value="AT5G09450.1"/>
    <property type="gene ID" value="AT5G09450"/>
</dbReference>
<dbReference type="GeneID" id="830804"/>
<dbReference type="Gramene" id="AT5G09450.1">
    <property type="protein sequence ID" value="AT5G09450.1"/>
    <property type="gene ID" value="AT5G09450"/>
</dbReference>
<dbReference type="KEGG" id="ath:AT5G09450"/>
<dbReference type="Araport" id="AT5G09450"/>
<dbReference type="TAIR" id="AT5G09450"/>
<dbReference type="eggNOG" id="KOG4197">
    <property type="taxonomic scope" value="Eukaryota"/>
</dbReference>
<dbReference type="HOGENOM" id="CLU_019802_0_0_1"/>
<dbReference type="InParanoid" id="Q94B59"/>
<dbReference type="OMA" id="NYICIIS"/>
<dbReference type="PhylomeDB" id="Q94B59"/>
<dbReference type="PRO" id="PR:Q94B59"/>
<dbReference type="Proteomes" id="UP000006548">
    <property type="component" value="Chromosome 5"/>
</dbReference>
<dbReference type="ExpressionAtlas" id="Q94B59">
    <property type="expression patterns" value="baseline and differential"/>
</dbReference>
<dbReference type="GO" id="GO:0005739">
    <property type="term" value="C:mitochondrion"/>
    <property type="evidence" value="ECO:0007669"/>
    <property type="project" value="UniProtKB-SubCell"/>
</dbReference>
<dbReference type="GO" id="GO:0003729">
    <property type="term" value="F:mRNA binding"/>
    <property type="evidence" value="ECO:0007669"/>
    <property type="project" value="UniProtKB-ARBA"/>
</dbReference>
<dbReference type="FunFam" id="1.25.40.10:FF:001248">
    <property type="entry name" value="Pentatricopeptide repeat-containing protein At5g09450, mitochondrial"/>
    <property type="match status" value="1"/>
</dbReference>
<dbReference type="Gene3D" id="1.25.40.10">
    <property type="entry name" value="Tetratricopeptide repeat domain"/>
    <property type="match status" value="1"/>
</dbReference>
<dbReference type="InterPro" id="IPR002885">
    <property type="entry name" value="Pentatricopeptide_rpt"/>
</dbReference>
<dbReference type="InterPro" id="IPR011990">
    <property type="entry name" value="TPR-like_helical_dom_sf"/>
</dbReference>
<dbReference type="NCBIfam" id="TIGR00756">
    <property type="entry name" value="PPR"/>
    <property type="match status" value="2"/>
</dbReference>
<dbReference type="PANTHER" id="PTHR45717:SF4">
    <property type="entry name" value="OS04G0450200 PROTEIN"/>
    <property type="match status" value="1"/>
</dbReference>
<dbReference type="PANTHER" id="PTHR45717">
    <property type="entry name" value="OS12G0527900 PROTEIN"/>
    <property type="match status" value="1"/>
</dbReference>
<dbReference type="Pfam" id="PF01535">
    <property type="entry name" value="PPR"/>
    <property type="match status" value="2"/>
</dbReference>
<dbReference type="Pfam" id="PF13041">
    <property type="entry name" value="PPR_2"/>
    <property type="match status" value="1"/>
</dbReference>
<dbReference type="PROSITE" id="PS51375">
    <property type="entry name" value="PPR"/>
    <property type="match status" value="4"/>
</dbReference>
<name>PP372_ARATH</name>
<reference key="1">
    <citation type="journal article" date="2000" name="Nature">
        <title>Sequence and analysis of chromosome 5 of the plant Arabidopsis thaliana.</title>
        <authorList>
            <person name="Tabata S."/>
            <person name="Kaneko T."/>
            <person name="Nakamura Y."/>
            <person name="Kotani H."/>
            <person name="Kato T."/>
            <person name="Asamizu E."/>
            <person name="Miyajima N."/>
            <person name="Sasamoto S."/>
            <person name="Kimura T."/>
            <person name="Hosouchi T."/>
            <person name="Kawashima K."/>
            <person name="Kohara M."/>
            <person name="Matsumoto M."/>
            <person name="Matsuno A."/>
            <person name="Muraki A."/>
            <person name="Nakayama S."/>
            <person name="Nakazaki N."/>
            <person name="Naruo K."/>
            <person name="Okumura S."/>
            <person name="Shinpo S."/>
            <person name="Takeuchi C."/>
            <person name="Wada T."/>
            <person name="Watanabe A."/>
            <person name="Yamada M."/>
            <person name="Yasuda M."/>
            <person name="Sato S."/>
            <person name="de la Bastide M."/>
            <person name="Huang E."/>
            <person name="Spiegel L."/>
            <person name="Gnoj L."/>
            <person name="O'Shaughnessy A."/>
            <person name="Preston R."/>
            <person name="Habermann K."/>
            <person name="Murray J."/>
            <person name="Johnson D."/>
            <person name="Rohlfing T."/>
            <person name="Nelson J."/>
            <person name="Stoneking T."/>
            <person name="Pepin K."/>
            <person name="Spieth J."/>
            <person name="Sekhon M."/>
            <person name="Armstrong J."/>
            <person name="Becker M."/>
            <person name="Belter E."/>
            <person name="Cordum H."/>
            <person name="Cordes M."/>
            <person name="Courtney L."/>
            <person name="Courtney W."/>
            <person name="Dante M."/>
            <person name="Du H."/>
            <person name="Edwards J."/>
            <person name="Fryman J."/>
            <person name="Haakensen B."/>
            <person name="Lamar E."/>
            <person name="Latreille P."/>
            <person name="Leonard S."/>
            <person name="Meyer R."/>
            <person name="Mulvaney E."/>
            <person name="Ozersky P."/>
            <person name="Riley A."/>
            <person name="Strowmatt C."/>
            <person name="Wagner-McPherson C."/>
            <person name="Wollam A."/>
            <person name="Yoakum M."/>
            <person name="Bell M."/>
            <person name="Dedhia N."/>
            <person name="Parnell L."/>
            <person name="Shah R."/>
            <person name="Rodriguez M."/>
            <person name="Hoon See L."/>
            <person name="Vil D."/>
            <person name="Baker J."/>
            <person name="Kirchoff K."/>
            <person name="Toth K."/>
            <person name="King L."/>
            <person name="Bahret A."/>
            <person name="Miller B."/>
            <person name="Marra M.A."/>
            <person name="Martienssen R."/>
            <person name="McCombie W.R."/>
            <person name="Wilson R.K."/>
            <person name="Murphy G."/>
            <person name="Bancroft I."/>
            <person name="Volckaert G."/>
            <person name="Wambutt R."/>
            <person name="Duesterhoeft A."/>
            <person name="Stiekema W."/>
            <person name="Pohl T."/>
            <person name="Entian K.-D."/>
            <person name="Terryn N."/>
            <person name="Hartley N."/>
            <person name="Bent E."/>
            <person name="Johnson S."/>
            <person name="Langham S.-A."/>
            <person name="McCullagh B."/>
            <person name="Robben J."/>
            <person name="Grymonprez B."/>
            <person name="Zimmermann W."/>
            <person name="Ramsperger U."/>
            <person name="Wedler H."/>
            <person name="Balke K."/>
            <person name="Wedler E."/>
            <person name="Peters S."/>
            <person name="van Staveren M."/>
            <person name="Dirkse W."/>
            <person name="Mooijman P."/>
            <person name="Klein Lankhorst R."/>
            <person name="Weitzenegger T."/>
            <person name="Bothe G."/>
            <person name="Rose M."/>
            <person name="Hauf J."/>
            <person name="Berneiser S."/>
            <person name="Hempel S."/>
            <person name="Feldpausch M."/>
            <person name="Lamberth S."/>
            <person name="Villarroel R."/>
            <person name="Gielen J."/>
            <person name="Ardiles W."/>
            <person name="Bents O."/>
            <person name="Lemcke K."/>
            <person name="Kolesov G."/>
            <person name="Mayer K.F.X."/>
            <person name="Rudd S."/>
            <person name="Schoof H."/>
            <person name="Schueller C."/>
            <person name="Zaccaria P."/>
            <person name="Mewes H.-W."/>
            <person name="Bevan M."/>
            <person name="Fransz P.F."/>
        </authorList>
    </citation>
    <scope>NUCLEOTIDE SEQUENCE [LARGE SCALE GENOMIC DNA]</scope>
    <source>
        <strain>cv. Columbia</strain>
    </source>
</reference>
<reference key="2">
    <citation type="journal article" date="2017" name="Plant J.">
        <title>Araport11: a complete reannotation of the Arabidopsis thaliana reference genome.</title>
        <authorList>
            <person name="Cheng C.Y."/>
            <person name="Krishnakumar V."/>
            <person name="Chan A.P."/>
            <person name="Thibaud-Nissen F."/>
            <person name="Schobel S."/>
            <person name="Town C.D."/>
        </authorList>
    </citation>
    <scope>GENOME REANNOTATION</scope>
    <source>
        <strain>cv. Columbia</strain>
    </source>
</reference>
<reference key="3">
    <citation type="journal article" date="2003" name="Science">
        <title>Empirical analysis of transcriptional activity in the Arabidopsis genome.</title>
        <authorList>
            <person name="Yamada K."/>
            <person name="Lim J."/>
            <person name="Dale J.M."/>
            <person name="Chen H."/>
            <person name="Shinn P."/>
            <person name="Palm C.J."/>
            <person name="Southwick A.M."/>
            <person name="Wu H.C."/>
            <person name="Kim C.J."/>
            <person name="Nguyen M."/>
            <person name="Pham P.K."/>
            <person name="Cheuk R.F."/>
            <person name="Karlin-Newmann G."/>
            <person name="Liu S.X."/>
            <person name="Lam B."/>
            <person name="Sakano H."/>
            <person name="Wu T."/>
            <person name="Yu G."/>
            <person name="Miranda M."/>
            <person name="Quach H.L."/>
            <person name="Tripp M."/>
            <person name="Chang C.H."/>
            <person name="Lee J.M."/>
            <person name="Toriumi M.J."/>
            <person name="Chan M.M."/>
            <person name="Tang C.C."/>
            <person name="Onodera C.S."/>
            <person name="Deng J.M."/>
            <person name="Akiyama K."/>
            <person name="Ansari Y."/>
            <person name="Arakawa T."/>
            <person name="Banh J."/>
            <person name="Banno F."/>
            <person name="Bowser L."/>
            <person name="Brooks S.Y."/>
            <person name="Carninci P."/>
            <person name="Chao Q."/>
            <person name="Choy N."/>
            <person name="Enju A."/>
            <person name="Goldsmith A.D."/>
            <person name="Gurjal M."/>
            <person name="Hansen N.F."/>
            <person name="Hayashizaki Y."/>
            <person name="Johnson-Hopson C."/>
            <person name="Hsuan V.W."/>
            <person name="Iida K."/>
            <person name="Karnes M."/>
            <person name="Khan S."/>
            <person name="Koesema E."/>
            <person name="Ishida J."/>
            <person name="Jiang P.X."/>
            <person name="Jones T."/>
            <person name="Kawai J."/>
            <person name="Kamiya A."/>
            <person name="Meyers C."/>
            <person name="Nakajima M."/>
            <person name="Narusaka M."/>
            <person name="Seki M."/>
            <person name="Sakurai T."/>
            <person name="Satou M."/>
            <person name="Tamse R."/>
            <person name="Vaysberg M."/>
            <person name="Wallender E.K."/>
            <person name="Wong C."/>
            <person name="Yamamura Y."/>
            <person name="Yuan S."/>
            <person name="Shinozaki K."/>
            <person name="Davis R.W."/>
            <person name="Theologis A."/>
            <person name="Ecker J.R."/>
        </authorList>
    </citation>
    <scope>NUCLEOTIDE SEQUENCE [LARGE SCALE MRNA]</scope>
    <source>
        <strain>cv. Columbia</strain>
    </source>
</reference>
<reference key="4">
    <citation type="submission" date="2002-03" db="EMBL/GenBank/DDBJ databases">
        <title>Full-length cDNA from Arabidopsis thaliana.</title>
        <authorList>
            <person name="Brover V.V."/>
            <person name="Troukhan M.E."/>
            <person name="Alexandrov N.A."/>
            <person name="Lu Y.-P."/>
            <person name="Flavell R.B."/>
            <person name="Feldmann K.A."/>
        </authorList>
    </citation>
    <scope>NUCLEOTIDE SEQUENCE [LARGE SCALE MRNA]</scope>
</reference>
<reference key="5">
    <citation type="journal article" date="2004" name="Plant Cell">
        <title>Genome-wide analysis of Arabidopsis pentatricopeptide repeat proteins reveals their essential role in organelle biogenesis.</title>
        <authorList>
            <person name="Lurin C."/>
            <person name="Andres C."/>
            <person name="Aubourg S."/>
            <person name="Bellaoui M."/>
            <person name="Bitton F."/>
            <person name="Bruyere C."/>
            <person name="Caboche M."/>
            <person name="Debast C."/>
            <person name="Gualberto J."/>
            <person name="Hoffmann B."/>
            <person name="Lecharny A."/>
            <person name="Le Ret M."/>
            <person name="Martin-Magniette M.-L."/>
            <person name="Mireau H."/>
            <person name="Peeters N."/>
            <person name="Renou J.-P."/>
            <person name="Szurek B."/>
            <person name="Taconnat L."/>
            <person name="Small I."/>
        </authorList>
    </citation>
    <scope>GENE FAMILY</scope>
</reference>
<reference key="6">
    <citation type="journal article" date="2015" name="J. Exp. Bot.">
        <title>Identification of cleavage sites and substrate proteins for two mitochondrial intermediate peptidases in Arabidopsis thaliana.</title>
        <authorList>
            <person name="Carrie C."/>
            <person name="Venne A.S."/>
            <person name="Zahedi R.P."/>
            <person name="Soll J."/>
        </authorList>
    </citation>
    <scope>IDENTIFICATION BY MASS SPECTROMETRY</scope>
    <scope>CLEAVAGE OF TRANSIT PEPTIDE AFTER ASN-38</scope>
</reference>
<feature type="transit peptide" description="Mitochondrion" evidence="1">
    <location>
        <begin position="1"/>
        <end position="38"/>
    </location>
</feature>
<feature type="chain" id="PRO_0000363509" description="Pentatricopeptide repeat-containing protein At5g09450, mitochondrial">
    <location>
        <begin position="39"/>
        <end position="409"/>
    </location>
</feature>
<feature type="repeat" description="PPR 1">
    <location>
        <begin position="155"/>
        <end position="189"/>
    </location>
</feature>
<feature type="repeat" description="PPR 2">
    <location>
        <begin position="191"/>
        <end position="225"/>
    </location>
</feature>
<feature type="repeat" description="PPR 3">
    <location>
        <begin position="226"/>
        <end position="256"/>
    </location>
</feature>
<feature type="repeat" description="PPR 4">
    <location>
        <begin position="262"/>
        <end position="296"/>
    </location>
</feature>
<feature type="repeat" description="PPR 5">
    <location>
        <begin position="298"/>
        <end position="332"/>
    </location>
</feature>
<feature type="repeat" description="PPR 6">
    <location>
        <begin position="333"/>
        <end position="367"/>
    </location>
</feature>
<feature type="sequence conflict" description="In Ref. 4; AAM64472." evidence="2" ref="4">
    <original>D</original>
    <variation>H</variation>
    <location>
        <position position="150"/>
    </location>
</feature>
<comment type="subcellular location">
    <subcellularLocation>
        <location evidence="3">Mitochondrion</location>
    </subcellularLocation>
</comment>
<comment type="similarity">
    <text evidence="2">Belongs to the PPR family. P subfamily.</text>
</comment>
<comment type="sequence caution" evidence="2">
    <conflict type="erroneous gene model prediction">
        <sequence resource="EMBL-CDS" id="CAC05471"/>
    </conflict>
</comment>
<comment type="online information" name="Pentatricopeptide repeat proteins">
    <link uri="https://ppr.plantenergy.uwa.edu.au"/>
</comment>
<sequence length="409" mass="46809">MATRSLFHSLRCRLTNNGVLGSNFIRNAESSRFSKSYNADAAIGNSLVEESEEKDDLKSRIFRLRLPKRSATTVLEKWIGEGNQMTINELREISKELRRTRRYKHALEVTEWMVQHEESKISDADYASRIDLISKVFGIDAAERYFEGLDIDSKTAETYTSLLHAYAASKQTERAEALFKRIIESDSLTFGAITYNEMMTLYMSVGQVEKVPEVIEVLKQKKVSPDIFTYNLWLSSCAATFNIDELRKILEEMRHDASSNEGWVRYIDLTSIYINSSRVTNAESTLPVEAEKSISQREWITYDFLMILHTGLGNKVMIDQIWKSLRNTNQILSSRSYICVLSSYLMLGHLREAEEIIHQWKESKTTEFDASACLRILNAFRDVGLEGIASGFHLILVHNKCSLENEGSS</sequence>
<accession>Q94B59</accession>
<accession>Q8LCU1</accession>
<accession>Q9FY70</accession>
<gene>
    <name type="ordered locus">At5g09450</name>
    <name type="ORF">T5E8_250</name>
</gene>
<proteinExistence type="evidence at protein level"/>
<protein>
    <recommendedName>
        <fullName>Pentatricopeptide repeat-containing protein At5g09450, mitochondrial</fullName>
    </recommendedName>
</protein>
<evidence type="ECO:0000269" key="1">
    <source>
    </source>
</evidence>
<evidence type="ECO:0000305" key="2"/>
<evidence type="ECO:0000305" key="3">
    <source>
    </source>
</evidence>
<organism>
    <name type="scientific">Arabidopsis thaliana</name>
    <name type="common">Mouse-ear cress</name>
    <dbReference type="NCBI Taxonomy" id="3702"/>
    <lineage>
        <taxon>Eukaryota</taxon>
        <taxon>Viridiplantae</taxon>
        <taxon>Streptophyta</taxon>
        <taxon>Embryophyta</taxon>
        <taxon>Tracheophyta</taxon>
        <taxon>Spermatophyta</taxon>
        <taxon>Magnoliopsida</taxon>
        <taxon>eudicotyledons</taxon>
        <taxon>Gunneridae</taxon>
        <taxon>Pentapetalae</taxon>
        <taxon>rosids</taxon>
        <taxon>malvids</taxon>
        <taxon>Brassicales</taxon>
        <taxon>Brassicaceae</taxon>
        <taxon>Camelineae</taxon>
        <taxon>Arabidopsis</taxon>
    </lineage>
</organism>
<keyword id="KW-0496">Mitochondrion</keyword>
<keyword id="KW-1185">Reference proteome</keyword>
<keyword id="KW-0677">Repeat</keyword>
<keyword id="KW-0809">Transit peptide</keyword>